<organism>
    <name type="scientific">Photobacterium profundum (strain SS9)</name>
    <dbReference type="NCBI Taxonomy" id="298386"/>
    <lineage>
        <taxon>Bacteria</taxon>
        <taxon>Pseudomonadati</taxon>
        <taxon>Pseudomonadota</taxon>
        <taxon>Gammaproteobacteria</taxon>
        <taxon>Vibrionales</taxon>
        <taxon>Vibrionaceae</taxon>
        <taxon>Photobacterium</taxon>
    </lineage>
</organism>
<keyword id="KW-0028">Amino-acid biosynthesis</keyword>
<keyword id="KW-0057">Aromatic amino acid biosynthesis</keyword>
<keyword id="KW-0456">Lyase</keyword>
<keyword id="KW-0663">Pyridoxal phosphate</keyword>
<keyword id="KW-1185">Reference proteome</keyword>
<keyword id="KW-0822">Tryptophan biosynthesis</keyword>
<dbReference type="EC" id="4.2.1.20" evidence="1"/>
<dbReference type="EMBL" id="CR378671">
    <property type="protein sequence ID" value="CAG20872.1"/>
    <property type="molecule type" value="Genomic_DNA"/>
</dbReference>
<dbReference type="RefSeq" id="WP_011219155.1">
    <property type="nucleotide sequence ID" value="NC_006370.1"/>
</dbReference>
<dbReference type="SMR" id="Q6LPA4"/>
<dbReference type="STRING" id="298386.PBPRA2490"/>
<dbReference type="KEGG" id="ppr:PBPRA2490"/>
<dbReference type="eggNOG" id="COG0133">
    <property type="taxonomic scope" value="Bacteria"/>
</dbReference>
<dbReference type="HOGENOM" id="CLU_016734_3_1_6"/>
<dbReference type="UniPathway" id="UPA00035">
    <property type="reaction ID" value="UER00044"/>
</dbReference>
<dbReference type="Proteomes" id="UP000000593">
    <property type="component" value="Chromosome 1"/>
</dbReference>
<dbReference type="GO" id="GO:0005737">
    <property type="term" value="C:cytoplasm"/>
    <property type="evidence" value="ECO:0007669"/>
    <property type="project" value="TreeGrafter"/>
</dbReference>
<dbReference type="GO" id="GO:0004834">
    <property type="term" value="F:tryptophan synthase activity"/>
    <property type="evidence" value="ECO:0007669"/>
    <property type="project" value="UniProtKB-UniRule"/>
</dbReference>
<dbReference type="CDD" id="cd06446">
    <property type="entry name" value="Trp-synth_B"/>
    <property type="match status" value="1"/>
</dbReference>
<dbReference type="FunFam" id="3.40.50.1100:FF:000001">
    <property type="entry name" value="Tryptophan synthase beta chain"/>
    <property type="match status" value="1"/>
</dbReference>
<dbReference type="FunFam" id="3.40.50.1100:FF:000004">
    <property type="entry name" value="Tryptophan synthase beta chain"/>
    <property type="match status" value="1"/>
</dbReference>
<dbReference type="Gene3D" id="3.40.50.1100">
    <property type="match status" value="2"/>
</dbReference>
<dbReference type="HAMAP" id="MF_00133">
    <property type="entry name" value="Trp_synth_beta"/>
    <property type="match status" value="1"/>
</dbReference>
<dbReference type="InterPro" id="IPR006653">
    <property type="entry name" value="Trp_synth_b_CS"/>
</dbReference>
<dbReference type="InterPro" id="IPR006654">
    <property type="entry name" value="Trp_synth_beta"/>
</dbReference>
<dbReference type="InterPro" id="IPR023026">
    <property type="entry name" value="Trp_synth_beta/beta-like"/>
</dbReference>
<dbReference type="InterPro" id="IPR001926">
    <property type="entry name" value="TrpB-like_PALP"/>
</dbReference>
<dbReference type="InterPro" id="IPR036052">
    <property type="entry name" value="TrpB-like_PALP_sf"/>
</dbReference>
<dbReference type="NCBIfam" id="TIGR00263">
    <property type="entry name" value="trpB"/>
    <property type="match status" value="1"/>
</dbReference>
<dbReference type="PANTHER" id="PTHR48077:SF3">
    <property type="entry name" value="TRYPTOPHAN SYNTHASE"/>
    <property type="match status" value="1"/>
</dbReference>
<dbReference type="PANTHER" id="PTHR48077">
    <property type="entry name" value="TRYPTOPHAN SYNTHASE-RELATED"/>
    <property type="match status" value="1"/>
</dbReference>
<dbReference type="Pfam" id="PF00291">
    <property type="entry name" value="PALP"/>
    <property type="match status" value="1"/>
</dbReference>
<dbReference type="PIRSF" id="PIRSF001413">
    <property type="entry name" value="Trp_syn_beta"/>
    <property type="match status" value="1"/>
</dbReference>
<dbReference type="SUPFAM" id="SSF53686">
    <property type="entry name" value="Tryptophan synthase beta subunit-like PLP-dependent enzymes"/>
    <property type="match status" value="1"/>
</dbReference>
<dbReference type="PROSITE" id="PS00168">
    <property type="entry name" value="TRP_SYNTHASE_BETA"/>
    <property type="match status" value="1"/>
</dbReference>
<evidence type="ECO:0000255" key="1">
    <source>
        <dbReference type="HAMAP-Rule" id="MF_00133"/>
    </source>
</evidence>
<proteinExistence type="inferred from homology"/>
<accession>Q6LPA4</accession>
<comment type="function">
    <text evidence="1">The beta subunit is responsible for the synthesis of L-tryptophan from indole and L-serine.</text>
</comment>
<comment type="catalytic activity">
    <reaction evidence="1">
        <text>(1S,2R)-1-C-(indol-3-yl)glycerol 3-phosphate + L-serine = D-glyceraldehyde 3-phosphate + L-tryptophan + H2O</text>
        <dbReference type="Rhea" id="RHEA:10532"/>
        <dbReference type="ChEBI" id="CHEBI:15377"/>
        <dbReference type="ChEBI" id="CHEBI:33384"/>
        <dbReference type="ChEBI" id="CHEBI:57912"/>
        <dbReference type="ChEBI" id="CHEBI:58866"/>
        <dbReference type="ChEBI" id="CHEBI:59776"/>
        <dbReference type="EC" id="4.2.1.20"/>
    </reaction>
</comment>
<comment type="cofactor">
    <cofactor evidence="1">
        <name>pyridoxal 5'-phosphate</name>
        <dbReference type="ChEBI" id="CHEBI:597326"/>
    </cofactor>
</comment>
<comment type="pathway">
    <text evidence="1">Amino-acid biosynthesis; L-tryptophan biosynthesis; L-tryptophan from chorismate: step 5/5.</text>
</comment>
<comment type="subunit">
    <text evidence="1">Tetramer of two alpha and two beta chains.</text>
</comment>
<comment type="similarity">
    <text evidence="1">Belongs to the TrpB family.</text>
</comment>
<protein>
    <recommendedName>
        <fullName evidence="1">Tryptophan synthase beta chain</fullName>
        <ecNumber evidence="1">4.2.1.20</ecNumber>
    </recommendedName>
</protein>
<name>TRPB_PHOPR</name>
<gene>
    <name evidence="1" type="primary">trpB</name>
    <name type="ordered locus">PBPRA2490</name>
</gene>
<reference key="1">
    <citation type="journal article" date="2005" name="Science">
        <title>Life at depth: Photobacterium profundum genome sequence and expression analysis.</title>
        <authorList>
            <person name="Vezzi A."/>
            <person name="Campanaro S."/>
            <person name="D'Angelo M."/>
            <person name="Simonato F."/>
            <person name="Vitulo N."/>
            <person name="Lauro F.M."/>
            <person name="Cestaro A."/>
            <person name="Malacrida G."/>
            <person name="Simionati B."/>
            <person name="Cannata N."/>
            <person name="Romualdi C."/>
            <person name="Bartlett D.H."/>
            <person name="Valle G."/>
        </authorList>
    </citation>
    <scope>NUCLEOTIDE SEQUENCE [LARGE SCALE GENOMIC DNA]</scope>
    <source>
        <strain>ATCC BAA-1253 / SS9</strain>
    </source>
</reference>
<sequence>MSKLDAYFGEFGGQYVPQILVPALDQLEDAFIEAQQDPAFQKEFIDLLKDYAGRPTALTLCQNLTKGTKTKLYLKREDLLHGGAHKTNQVLGQALLAKRMGKKEIIAETGAGQHGVATALACALLGLKCRVYMGAKDIERQSPNVFRMKLMGATVIPVHSGSSTLKDACNEAMRDWSATYEEAHYLLGTAAGPHPFPTIVREFQRIIGEETKVQILEKEGRLPDAVIACVGGGSNAIGMFADFIDEKDVSLIGVEPAGKGLDTKMHGAPLKHGKLGIFFGMKAPLMQDEHGQVEESYSVSAGLDFPSVGPQHAHLNAIGRAEYGSVTDDEALDAFQLLARKEGIIPALESAHALAYALKMIEAEPEKEQLLVVNLSGRGDKDIFTVHDILDAKGVL</sequence>
<feature type="chain" id="PRO_1000018367" description="Tryptophan synthase beta chain">
    <location>
        <begin position="1"/>
        <end position="396"/>
    </location>
</feature>
<feature type="modified residue" description="N6-(pyridoxal phosphate)lysine" evidence="1">
    <location>
        <position position="86"/>
    </location>
</feature>